<keyword id="KW-0474">Menaquinone biosynthesis</keyword>
<keyword id="KW-0489">Methyltransferase</keyword>
<keyword id="KW-0949">S-adenosyl-L-methionine</keyword>
<keyword id="KW-0808">Transferase</keyword>
<keyword id="KW-0831">Ubiquinone biosynthesis</keyword>
<protein>
    <recommendedName>
        <fullName evidence="1">Ubiquinone/menaquinone biosynthesis C-methyltransferase UbiE</fullName>
        <ecNumber evidence="1">2.1.1.163</ecNumber>
        <ecNumber evidence="1">2.1.1.201</ecNumber>
    </recommendedName>
    <alternativeName>
        <fullName evidence="1">2-methoxy-6-polyprenyl-1,4-benzoquinol methylase</fullName>
    </alternativeName>
    <alternativeName>
        <fullName evidence="1">Demethylmenaquinone methyltransferase</fullName>
    </alternativeName>
</protein>
<name>UBIE_LEGPL</name>
<accession>Q5WSQ8</accession>
<reference key="1">
    <citation type="journal article" date="2004" name="Nat. Genet.">
        <title>Evidence in the Legionella pneumophila genome for exploitation of host cell functions and high genome plasticity.</title>
        <authorList>
            <person name="Cazalet C."/>
            <person name="Rusniok C."/>
            <person name="Brueggemann H."/>
            <person name="Zidane N."/>
            <person name="Magnier A."/>
            <person name="Ma L."/>
            <person name="Tichit M."/>
            <person name="Jarraud S."/>
            <person name="Bouchier C."/>
            <person name="Vandenesch F."/>
            <person name="Kunst F."/>
            <person name="Etienne J."/>
            <person name="Glaser P."/>
            <person name="Buchrieser C."/>
        </authorList>
    </citation>
    <scope>NUCLEOTIDE SEQUENCE [LARGE SCALE GENOMIC DNA]</scope>
    <source>
        <strain>Lens</strain>
    </source>
</reference>
<organism>
    <name type="scientific">Legionella pneumophila (strain Lens)</name>
    <dbReference type="NCBI Taxonomy" id="297245"/>
    <lineage>
        <taxon>Bacteria</taxon>
        <taxon>Pseudomonadati</taxon>
        <taxon>Pseudomonadota</taxon>
        <taxon>Gammaproteobacteria</taxon>
        <taxon>Legionellales</taxon>
        <taxon>Legionellaceae</taxon>
        <taxon>Legionella</taxon>
    </lineage>
</organism>
<feature type="chain" id="PRO_0000193288" description="Ubiquinone/menaquinone biosynthesis C-methyltransferase UbiE">
    <location>
        <begin position="1"/>
        <end position="250"/>
    </location>
</feature>
<feature type="binding site" evidence="1">
    <location>
        <position position="73"/>
    </location>
    <ligand>
        <name>S-adenosyl-L-methionine</name>
        <dbReference type="ChEBI" id="CHEBI:59789"/>
    </ligand>
</feature>
<feature type="binding site" evidence="1">
    <location>
        <position position="94"/>
    </location>
    <ligand>
        <name>S-adenosyl-L-methionine</name>
        <dbReference type="ChEBI" id="CHEBI:59789"/>
    </ligand>
</feature>
<feature type="binding site" evidence="1">
    <location>
        <begin position="122"/>
        <end position="123"/>
    </location>
    <ligand>
        <name>S-adenosyl-L-methionine</name>
        <dbReference type="ChEBI" id="CHEBI:59789"/>
    </ligand>
</feature>
<gene>
    <name evidence="1" type="primary">ubiE</name>
    <name type="ordered locus">lpl2818</name>
</gene>
<proteinExistence type="inferred from homology"/>
<evidence type="ECO:0000255" key="1">
    <source>
        <dbReference type="HAMAP-Rule" id="MF_01813"/>
    </source>
</evidence>
<sequence>MTNQKQTTHFGFKSVDWNEKEKKVAEVFHSVAKNYDRMNDLMSLGIHHLWKRYTIELSHVRPGQSVLDLAGGSGDLTRLLSQKVGDSGQVILADINAAMLHVGRDRLLDEGLFKNIRYVQGNAQCLPFADNSFHCITMGFGLRNVTDKDEALQSMYRVCKPGGKLMVLEFSTPVFPGLKPVYDWYSFNILPKIGKFVANDEASYQYLAESIRMHPDQETLKAMIERVGFEDCHYHNLSGGIVALHIAYKY</sequence>
<comment type="function">
    <text evidence="1">Methyltransferase required for the conversion of demethylmenaquinol (DMKH2) to menaquinol (MKH2) and the conversion of 2-polyprenyl-6-methoxy-1,4-benzoquinol (DDMQH2) to 2-polyprenyl-3-methyl-6-methoxy-1,4-benzoquinol (DMQH2).</text>
</comment>
<comment type="catalytic activity">
    <reaction evidence="1">
        <text>a 2-demethylmenaquinol + S-adenosyl-L-methionine = a menaquinol + S-adenosyl-L-homocysteine + H(+)</text>
        <dbReference type="Rhea" id="RHEA:42640"/>
        <dbReference type="Rhea" id="RHEA-COMP:9539"/>
        <dbReference type="Rhea" id="RHEA-COMP:9563"/>
        <dbReference type="ChEBI" id="CHEBI:15378"/>
        <dbReference type="ChEBI" id="CHEBI:18151"/>
        <dbReference type="ChEBI" id="CHEBI:55437"/>
        <dbReference type="ChEBI" id="CHEBI:57856"/>
        <dbReference type="ChEBI" id="CHEBI:59789"/>
        <dbReference type="EC" id="2.1.1.163"/>
    </reaction>
</comment>
<comment type="catalytic activity">
    <reaction evidence="1">
        <text>a 2-methoxy-6-(all-trans-polyprenyl)benzene-1,4-diol + S-adenosyl-L-methionine = a 5-methoxy-2-methyl-3-(all-trans-polyprenyl)benzene-1,4-diol + S-adenosyl-L-homocysteine + H(+)</text>
        <dbReference type="Rhea" id="RHEA:28286"/>
        <dbReference type="Rhea" id="RHEA-COMP:10858"/>
        <dbReference type="Rhea" id="RHEA-COMP:10859"/>
        <dbReference type="ChEBI" id="CHEBI:15378"/>
        <dbReference type="ChEBI" id="CHEBI:57856"/>
        <dbReference type="ChEBI" id="CHEBI:59789"/>
        <dbReference type="ChEBI" id="CHEBI:84166"/>
        <dbReference type="ChEBI" id="CHEBI:84167"/>
        <dbReference type="EC" id="2.1.1.201"/>
    </reaction>
</comment>
<comment type="pathway">
    <text evidence="1">Quinol/quinone metabolism; menaquinone biosynthesis; menaquinol from 1,4-dihydroxy-2-naphthoate: step 2/2.</text>
</comment>
<comment type="pathway">
    <text evidence="1">Cofactor biosynthesis; ubiquinone biosynthesis.</text>
</comment>
<comment type="similarity">
    <text evidence="1">Belongs to the class I-like SAM-binding methyltransferase superfamily. MenG/UbiE family.</text>
</comment>
<dbReference type="EC" id="2.1.1.163" evidence="1"/>
<dbReference type="EC" id="2.1.1.201" evidence="1"/>
<dbReference type="EMBL" id="CR628337">
    <property type="protein sequence ID" value="CAH17061.1"/>
    <property type="molecule type" value="Genomic_DNA"/>
</dbReference>
<dbReference type="RefSeq" id="WP_011216735.1">
    <property type="nucleotide sequence ID" value="NC_006369.1"/>
</dbReference>
<dbReference type="SMR" id="Q5WSQ8"/>
<dbReference type="KEGG" id="lpf:lpl2818"/>
<dbReference type="LegioList" id="lpl2818"/>
<dbReference type="HOGENOM" id="CLU_037990_0_0_6"/>
<dbReference type="UniPathway" id="UPA00079">
    <property type="reaction ID" value="UER00169"/>
</dbReference>
<dbReference type="UniPathway" id="UPA00232"/>
<dbReference type="Proteomes" id="UP000002517">
    <property type="component" value="Chromosome"/>
</dbReference>
<dbReference type="GO" id="GO:0008425">
    <property type="term" value="F:2-methoxy-6-polyprenyl-1,4-benzoquinol methyltransferase activity"/>
    <property type="evidence" value="ECO:0007669"/>
    <property type="project" value="UniProtKB-UniRule"/>
</dbReference>
<dbReference type="GO" id="GO:0043770">
    <property type="term" value="F:demethylmenaquinone methyltransferase activity"/>
    <property type="evidence" value="ECO:0007669"/>
    <property type="project" value="UniProtKB-UniRule"/>
</dbReference>
<dbReference type="GO" id="GO:0009060">
    <property type="term" value="P:aerobic respiration"/>
    <property type="evidence" value="ECO:0007669"/>
    <property type="project" value="UniProtKB-UniRule"/>
</dbReference>
<dbReference type="GO" id="GO:0009234">
    <property type="term" value="P:menaquinone biosynthetic process"/>
    <property type="evidence" value="ECO:0007669"/>
    <property type="project" value="UniProtKB-UniRule"/>
</dbReference>
<dbReference type="GO" id="GO:0032259">
    <property type="term" value="P:methylation"/>
    <property type="evidence" value="ECO:0007669"/>
    <property type="project" value="UniProtKB-KW"/>
</dbReference>
<dbReference type="CDD" id="cd02440">
    <property type="entry name" value="AdoMet_MTases"/>
    <property type="match status" value="1"/>
</dbReference>
<dbReference type="Gene3D" id="3.40.50.150">
    <property type="entry name" value="Vaccinia Virus protein VP39"/>
    <property type="match status" value="1"/>
</dbReference>
<dbReference type="HAMAP" id="MF_01813">
    <property type="entry name" value="MenG_UbiE_methyltr"/>
    <property type="match status" value="1"/>
</dbReference>
<dbReference type="InterPro" id="IPR029063">
    <property type="entry name" value="SAM-dependent_MTases_sf"/>
</dbReference>
<dbReference type="InterPro" id="IPR004033">
    <property type="entry name" value="UbiE/COQ5_MeTrFase"/>
</dbReference>
<dbReference type="InterPro" id="IPR023576">
    <property type="entry name" value="UbiE/COQ5_MeTrFase_CS"/>
</dbReference>
<dbReference type="NCBIfam" id="TIGR01934">
    <property type="entry name" value="MenG_MenH_UbiE"/>
    <property type="match status" value="1"/>
</dbReference>
<dbReference type="NCBIfam" id="NF001240">
    <property type="entry name" value="PRK00216.1-1"/>
    <property type="match status" value="1"/>
</dbReference>
<dbReference type="NCBIfam" id="NF001244">
    <property type="entry name" value="PRK00216.1-5"/>
    <property type="match status" value="1"/>
</dbReference>
<dbReference type="PANTHER" id="PTHR43591:SF24">
    <property type="entry name" value="2-METHOXY-6-POLYPRENYL-1,4-BENZOQUINOL METHYLASE, MITOCHONDRIAL"/>
    <property type="match status" value="1"/>
</dbReference>
<dbReference type="PANTHER" id="PTHR43591">
    <property type="entry name" value="METHYLTRANSFERASE"/>
    <property type="match status" value="1"/>
</dbReference>
<dbReference type="Pfam" id="PF01209">
    <property type="entry name" value="Ubie_methyltran"/>
    <property type="match status" value="1"/>
</dbReference>
<dbReference type="SUPFAM" id="SSF53335">
    <property type="entry name" value="S-adenosyl-L-methionine-dependent methyltransferases"/>
    <property type="match status" value="1"/>
</dbReference>
<dbReference type="PROSITE" id="PS51608">
    <property type="entry name" value="SAM_MT_UBIE"/>
    <property type="match status" value="1"/>
</dbReference>
<dbReference type="PROSITE" id="PS01183">
    <property type="entry name" value="UBIE_1"/>
    <property type="match status" value="1"/>
</dbReference>
<dbReference type="PROSITE" id="PS01184">
    <property type="entry name" value="UBIE_2"/>
    <property type="match status" value="1"/>
</dbReference>